<evidence type="ECO:0000250" key="1"/>
<evidence type="ECO:0000255" key="2"/>
<evidence type="ECO:0000269" key="3">
    <source>
    </source>
</evidence>
<evidence type="ECO:0000305" key="4"/>
<evidence type="ECO:0000312" key="5">
    <source>
        <dbReference type="EMBL" id="AAN13823.2"/>
    </source>
</evidence>
<accession>Q8IN58</accession>
<feature type="chain" id="PRO_0000216540" description="Putative gustatory receptor 92a">
    <location>
        <begin position="1"/>
        <end position="386"/>
    </location>
</feature>
<feature type="topological domain" description="Cytoplasmic" evidence="1">
    <location>
        <begin position="1"/>
        <end position="14"/>
    </location>
</feature>
<feature type="transmembrane region" description="Helical; Name=1" evidence="2">
    <location>
        <begin position="15"/>
        <end position="35"/>
    </location>
</feature>
<feature type="topological domain" description="Extracellular" evidence="1">
    <location>
        <begin position="36"/>
        <end position="79"/>
    </location>
</feature>
<feature type="transmembrane region" description="Helical; Name=2" evidence="2">
    <location>
        <begin position="80"/>
        <end position="100"/>
    </location>
</feature>
<feature type="topological domain" description="Cytoplasmic" evidence="1">
    <location>
        <begin position="101"/>
        <end position="141"/>
    </location>
</feature>
<feature type="transmembrane region" description="Helical; Name=3" evidence="2">
    <location>
        <begin position="142"/>
        <end position="162"/>
    </location>
</feature>
<feature type="topological domain" description="Extracellular" evidence="1">
    <location>
        <begin position="163"/>
        <end position="169"/>
    </location>
</feature>
<feature type="transmembrane region" description="Helical; Name=4" evidence="2">
    <location>
        <begin position="170"/>
        <end position="190"/>
    </location>
</feature>
<feature type="topological domain" description="Cytoplasmic" evidence="1">
    <location>
        <begin position="191"/>
        <end position="256"/>
    </location>
</feature>
<feature type="transmembrane region" description="Helical; Name=5" evidence="2">
    <location>
        <begin position="257"/>
        <end position="277"/>
    </location>
</feature>
<feature type="topological domain" description="Extracellular" evidence="1">
    <location>
        <begin position="278"/>
        <end position="287"/>
    </location>
</feature>
<feature type="transmembrane region" description="Helical; Name=6" evidence="2">
    <location>
        <begin position="288"/>
        <end position="308"/>
    </location>
</feature>
<feature type="topological domain" description="Cytoplasmic" evidence="1">
    <location>
        <begin position="309"/>
        <end position="356"/>
    </location>
</feature>
<feature type="transmembrane region" description="Helical; Name=7" evidence="2">
    <location>
        <begin position="357"/>
        <end position="377"/>
    </location>
</feature>
<feature type="topological domain" description="Extracellular" evidence="1">
    <location>
        <begin position="378"/>
        <end position="386"/>
    </location>
</feature>
<feature type="glycosylation site" description="N-linked (GlcNAc...) asparagine" evidence="2">
    <location>
        <position position="54"/>
    </location>
</feature>
<dbReference type="EMBL" id="AE014297">
    <property type="protein sequence ID" value="AAN13823.2"/>
    <property type="molecule type" value="Genomic_DNA"/>
</dbReference>
<dbReference type="RefSeq" id="NP_732489.2">
    <property type="nucleotide sequence ID" value="NM_169889.2"/>
</dbReference>
<dbReference type="SMR" id="Q8IN58"/>
<dbReference type="STRING" id="7227.FBpp0083274"/>
<dbReference type="GlyCosmos" id="Q8IN58">
    <property type="glycosylation" value="1 site, No reported glycans"/>
</dbReference>
<dbReference type="GlyGen" id="Q8IN58">
    <property type="glycosylation" value="1 site"/>
</dbReference>
<dbReference type="PaxDb" id="7227-FBpp0083274"/>
<dbReference type="EnsemblMetazoa" id="FBtr0083865">
    <property type="protein sequence ID" value="FBpp0083274"/>
    <property type="gene ID" value="FBgn0045471"/>
</dbReference>
<dbReference type="GeneID" id="117473"/>
<dbReference type="KEGG" id="dme:Dmel_CG31208"/>
<dbReference type="AGR" id="FB:FBgn0045471"/>
<dbReference type="CTD" id="117473"/>
<dbReference type="FlyBase" id="FBgn0045471">
    <property type="gene designation" value="Gr92a"/>
</dbReference>
<dbReference type="VEuPathDB" id="VectorBase:FBgn0045471"/>
<dbReference type="GeneTree" id="ENSGT00540000073758"/>
<dbReference type="HOGENOM" id="CLU_059451_0_0_1"/>
<dbReference type="InParanoid" id="Q8IN58"/>
<dbReference type="OMA" id="RYIFRYA"/>
<dbReference type="OrthoDB" id="7862019at2759"/>
<dbReference type="PhylomeDB" id="Q8IN58"/>
<dbReference type="BioGRID-ORCS" id="117473">
    <property type="hits" value="0 hits in 1 CRISPR screen"/>
</dbReference>
<dbReference type="GenomeRNAi" id="117473"/>
<dbReference type="PRO" id="PR:Q8IN58"/>
<dbReference type="Proteomes" id="UP000000803">
    <property type="component" value="Chromosome 3R"/>
</dbReference>
<dbReference type="ExpressionAtlas" id="Q8IN58">
    <property type="expression patterns" value="baseline and differential"/>
</dbReference>
<dbReference type="GO" id="GO:0016020">
    <property type="term" value="C:membrane"/>
    <property type="evidence" value="ECO:0000303"/>
    <property type="project" value="UniProtKB"/>
</dbReference>
<dbReference type="GO" id="GO:0005886">
    <property type="term" value="C:plasma membrane"/>
    <property type="evidence" value="ECO:0000250"/>
    <property type="project" value="FlyBase"/>
</dbReference>
<dbReference type="GO" id="GO:0015276">
    <property type="term" value="F:ligand-gated monoatomic ion channel activity"/>
    <property type="evidence" value="ECO:0000250"/>
    <property type="project" value="FlyBase"/>
</dbReference>
<dbReference type="GO" id="GO:0008527">
    <property type="term" value="F:taste receptor activity"/>
    <property type="evidence" value="ECO:0000250"/>
    <property type="project" value="FlyBase"/>
</dbReference>
<dbReference type="GO" id="GO:0034220">
    <property type="term" value="P:monoatomic ion transmembrane transport"/>
    <property type="evidence" value="ECO:0000250"/>
    <property type="project" value="FlyBase"/>
</dbReference>
<dbReference type="GO" id="GO:0050909">
    <property type="term" value="P:sensory perception of taste"/>
    <property type="evidence" value="ECO:0000303"/>
    <property type="project" value="UniProtKB"/>
</dbReference>
<dbReference type="GO" id="GO:0007165">
    <property type="term" value="P:signal transduction"/>
    <property type="evidence" value="ECO:0007669"/>
    <property type="project" value="UniProtKB-KW"/>
</dbReference>
<dbReference type="InterPro" id="IPR013604">
    <property type="entry name" value="7TM_chemorcpt"/>
</dbReference>
<dbReference type="Pfam" id="PF08395">
    <property type="entry name" value="7tm_7"/>
    <property type="match status" value="1"/>
</dbReference>
<gene>
    <name type="primary">Gr92a</name>
    <name type="ORF">CG31208</name>
</gene>
<sequence length="386" mass="45384">MFEFLHQMSAPKLSTSILRYIFRYAQFIGVIFFCLHTRKDDKTVFIRNWLKWLNVTHRIITFTRFFWVYIASISIKTNRVLQVLHGMRLVLSIPNVAVILCYHIFRGPEIIDLINQFLRLFRQVSDLFKTKTPGFGGRRELILILLNLISFAHEQTYLWFTIRKGFSWRFLIDWWCDFYLVSATNIFIHINSIGYLSLGVLYSELNKYVYTNLRIQLQKLNTSGSKQKIRRVQNRLEKCISLYREIYHTSIMFHKLFVPLLFLALIYKVLLIALIGFNVAVEFYLNSFIFWILLGKHVLDLFLVTVSVEGAVNQFLNIGMQFGNVGDLSKFQTTLDTLFLHLRLGHFRVSILGLFDVTQMQYLQFLSALLSGLAFIAQYRMQVGNG</sequence>
<proteinExistence type="inferred from homology"/>
<organism evidence="5">
    <name type="scientific">Drosophila melanogaster</name>
    <name type="common">Fruit fly</name>
    <dbReference type="NCBI Taxonomy" id="7227"/>
    <lineage>
        <taxon>Eukaryota</taxon>
        <taxon>Metazoa</taxon>
        <taxon>Ecdysozoa</taxon>
        <taxon>Arthropoda</taxon>
        <taxon>Hexapoda</taxon>
        <taxon>Insecta</taxon>
        <taxon>Pterygota</taxon>
        <taxon>Neoptera</taxon>
        <taxon>Endopterygota</taxon>
        <taxon>Diptera</taxon>
        <taxon>Brachycera</taxon>
        <taxon>Muscomorpha</taxon>
        <taxon>Ephydroidea</taxon>
        <taxon>Drosophilidae</taxon>
        <taxon>Drosophila</taxon>
        <taxon>Sophophora</taxon>
    </lineage>
</organism>
<comment type="function">
    <text evidence="1">Probable gustatory receptor which mediates acceptance or avoidance behavior, depending on its substrates.</text>
</comment>
<comment type="subcellular location">
    <subcellularLocation>
        <location evidence="1">Cell membrane</location>
        <topology evidence="1">Multi-pass membrane protein</topology>
    </subcellularLocation>
</comment>
<comment type="similarity">
    <text evidence="4">Belongs to the insect chemoreceptor superfamily. Gustatory receptor (GR) family. Gr93a subfamily.</text>
</comment>
<keyword id="KW-1003">Cell membrane</keyword>
<keyword id="KW-0325">Glycoprotein</keyword>
<keyword id="KW-0472">Membrane</keyword>
<keyword id="KW-0675">Receptor</keyword>
<keyword id="KW-1185">Reference proteome</keyword>
<keyword id="KW-0807">Transducer</keyword>
<keyword id="KW-0812">Transmembrane</keyword>
<keyword id="KW-1133">Transmembrane helix</keyword>
<protein>
    <recommendedName>
        <fullName>Putative gustatory receptor 92a</fullName>
    </recommendedName>
</protein>
<name>GR92A_DROME</name>
<reference evidence="4" key="1">
    <citation type="journal article" date="2000" name="Science">
        <title>The genome sequence of Drosophila melanogaster.</title>
        <authorList>
            <person name="Adams M.D."/>
            <person name="Celniker S.E."/>
            <person name="Holt R.A."/>
            <person name="Evans C.A."/>
            <person name="Gocayne J.D."/>
            <person name="Amanatides P.G."/>
            <person name="Scherer S.E."/>
            <person name="Li P.W."/>
            <person name="Hoskins R.A."/>
            <person name="Galle R.F."/>
            <person name="George R.A."/>
            <person name="Lewis S.E."/>
            <person name="Richards S."/>
            <person name="Ashburner M."/>
            <person name="Henderson S.N."/>
            <person name="Sutton G.G."/>
            <person name="Wortman J.R."/>
            <person name="Yandell M.D."/>
            <person name="Zhang Q."/>
            <person name="Chen L.X."/>
            <person name="Brandon R.C."/>
            <person name="Rogers Y.-H.C."/>
            <person name="Blazej R.G."/>
            <person name="Champe M."/>
            <person name="Pfeiffer B.D."/>
            <person name="Wan K.H."/>
            <person name="Doyle C."/>
            <person name="Baxter E.G."/>
            <person name="Helt G."/>
            <person name="Nelson C.R."/>
            <person name="Miklos G.L.G."/>
            <person name="Abril J.F."/>
            <person name="Agbayani A."/>
            <person name="An H.-J."/>
            <person name="Andrews-Pfannkoch C."/>
            <person name="Baldwin D."/>
            <person name="Ballew R.M."/>
            <person name="Basu A."/>
            <person name="Baxendale J."/>
            <person name="Bayraktaroglu L."/>
            <person name="Beasley E.M."/>
            <person name="Beeson K.Y."/>
            <person name="Benos P.V."/>
            <person name="Berman B.P."/>
            <person name="Bhandari D."/>
            <person name="Bolshakov S."/>
            <person name="Borkova D."/>
            <person name="Botchan M.R."/>
            <person name="Bouck J."/>
            <person name="Brokstein P."/>
            <person name="Brottier P."/>
            <person name="Burtis K.C."/>
            <person name="Busam D.A."/>
            <person name="Butler H."/>
            <person name="Cadieu E."/>
            <person name="Center A."/>
            <person name="Chandra I."/>
            <person name="Cherry J.M."/>
            <person name="Cawley S."/>
            <person name="Dahlke C."/>
            <person name="Davenport L.B."/>
            <person name="Davies P."/>
            <person name="de Pablos B."/>
            <person name="Delcher A."/>
            <person name="Deng Z."/>
            <person name="Mays A.D."/>
            <person name="Dew I."/>
            <person name="Dietz S.M."/>
            <person name="Dodson K."/>
            <person name="Doup L.E."/>
            <person name="Downes M."/>
            <person name="Dugan-Rocha S."/>
            <person name="Dunkov B.C."/>
            <person name="Dunn P."/>
            <person name="Durbin K.J."/>
            <person name="Evangelista C.C."/>
            <person name="Ferraz C."/>
            <person name="Ferriera S."/>
            <person name="Fleischmann W."/>
            <person name="Fosler C."/>
            <person name="Gabrielian A.E."/>
            <person name="Garg N.S."/>
            <person name="Gelbart W.M."/>
            <person name="Glasser K."/>
            <person name="Glodek A."/>
            <person name="Gong F."/>
            <person name="Gorrell J.H."/>
            <person name="Gu Z."/>
            <person name="Guan P."/>
            <person name="Harris M."/>
            <person name="Harris N.L."/>
            <person name="Harvey D.A."/>
            <person name="Heiman T.J."/>
            <person name="Hernandez J.R."/>
            <person name="Houck J."/>
            <person name="Hostin D."/>
            <person name="Houston K.A."/>
            <person name="Howland T.J."/>
            <person name="Wei M.-H."/>
            <person name="Ibegwam C."/>
            <person name="Jalali M."/>
            <person name="Kalush F."/>
            <person name="Karpen G.H."/>
            <person name="Ke Z."/>
            <person name="Kennison J.A."/>
            <person name="Ketchum K.A."/>
            <person name="Kimmel B.E."/>
            <person name="Kodira C.D."/>
            <person name="Kraft C.L."/>
            <person name="Kravitz S."/>
            <person name="Kulp D."/>
            <person name="Lai Z."/>
            <person name="Lasko P."/>
            <person name="Lei Y."/>
            <person name="Levitsky A.A."/>
            <person name="Li J.H."/>
            <person name="Li Z."/>
            <person name="Liang Y."/>
            <person name="Lin X."/>
            <person name="Liu X."/>
            <person name="Mattei B."/>
            <person name="McIntosh T.C."/>
            <person name="McLeod M.P."/>
            <person name="McPherson D."/>
            <person name="Merkulov G."/>
            <person name="Milshina N.V."/>
            <person name="Mobarry C."/>
            <person name="Morris J."/>
            <person name="Moshrefi A."/>
            <person name="Mount S.M."/>
            <person name="Moy M."/>
            <person name="Murphy B."/>
            <person name="Murphy L."/>
            <person name="Muzny D.M."/>
            <person name="Nelson D.L."/>
            <person name="Nelson D.R."/>
            <person name="Nelson K.A."/>
            <person name="Nixon K."/>
            <person name="Nusskern D.R."/>
            <person name="Pacleb J.M."/>
            <person name="Palazzolo M."/>
            <person name="Pittman G.S."/>
            <person name="Pan S."/>
            <person name="Pollard J."/>
            <person name="Puri V."/>
            <person name="Reese M.G."/>
            <person name="Reinert K."/>
            <person name="Remington K."/>
            <person name="Saunders R.D.C."/>
            <person name="Scheeler F."/>
            <person name="Shen H."/>
            <person name="Shue B.C."/>
            <person name="Siden-Kiamos I."/>
            <person name="Simpson M."/>
            <person name="Skupski M.P."/>
            <person name="Smith T.J."/>
            <person name="Spier E."/>
            <person name="Spradling A.C."/>
            <person name="Stapleton M."/>
            <person name="Strong R."/>
            <person name="Sun E."/>
            <person name="Svirskas R."/>
            <person name="Tector C."/>
            <person name="Turner R."/>
            <person name="Venter E."/>
            <person name="Wang A.H."/>
            <person name="Wang X."/>
            <person name="Wang Z.-Y."/>
            <person name="Wassarman D.A."/>
            <person name="Weinstock G.M."/>
            <person name="Weissenbach J."/>
            <person name="Williams S.M."/>
            <person name="Woodage T."/>
            <person name="Worley K.C."/>
            <person name="Wu D."/>
            <person name="Yang S."/>
            <person name="Yao Q.A."/>
            <person name="Ye J."/>
            <person name="Yeh R.-F."/>
            <person name="Zaveri J.S."/>
            <person name="Zhan M."/>
            <person name="Zhang G."/>
            <person name="Zhao Q."/>
            <person name="Zheng L."/>
            <person name="Zheng X.H."/>
            <person name="Zhong F.N."/>
            <person name="Zhong W."/>
            <person name="Zhou X."/>
            <person name="Zhu S.C."/>
            <person name="Zhu X."/>
            <person name="Smith H.O."/>
            <person name="Gibbs R.A."/>
            <person name="Myers E.W."/>
            <person name="Rubin G.M."/>
            <person name="Venter J.C."/>
        </authorList>
    </citation>
    <scope>NUCLEOTIDE SEQUENCE [LARGE SCALE GENOMIC DNA]</scope>
    <source>
        <strain evidence="3">Berkeley</strain>
    </source>
</reference>
<reference evidence="4" key="2">
    <citation type="journal article" date="2002" name="Genome Biol.">
        <title>Annotation of the Drosophila melanogaster euchromatic genome: a systematic review.</title>
        <authorList>
            <person name="Misra S."/>
            <person name="Crosby M.A."/>
            <person name="Mungall C.J."/>
            <person name="Matthews B.B."/>
            <person name="Campbell K.S."/>
            <person name="Hradecky P."/>
            <person name="Huang Y."/>
            <person name="Kaminker J.S."/>
            <person name="Millburn G.H."/>
            <person name="Prochnik S.E."/>
            <person name="Smith C.D."/>
            <person name="Tupy J.L."/>
            <person name="Whitfield E.J."/>
            <person name="Bayraktaroglu L."/>
            <person name="Berman B.P."/>
            <person name="Bettencourt B.R."/>
            <person name="Celniker S.E."/>
            <person name="de Grey A.D.N.J."/>
            <person name="Drysdale R.A."/>
            <person name="Harris N.L."/>
            <person name="Richter J."/>
            <person name="Russo S."/>
            <person name="Schroeder A.J."/>
            <person name="Shu S.Q."/>
            <person name="Stapleton M."/>
            <person name="Yamada C."/>
            <person name="Ashburner M."/>
            <person name="Gelbart W.M."/>
            <person name="Rubin G.M."/>
            <person name="Lewis S.E."/>
        </authorList>
    </citation>
    <scope>GENOME REANNOTATION</scope>
    <source>
        <strain>Berkeley</strain>
    </source>
</reference>
<reference evidence="4" key="3">
    <citation type="journal article" date="2001" name="Curr. Biol.">
        <title>Spatially restricted expression of candidate taste receptors in the Drosophila gustatory system.</title>
        <authorList>
            <person name="Dunipace L."/>
            <person name="Meister S."/>
            <person name="McNealy C."/>
            <person name="Amrein H."/>
        </authorList>
    </citation>
    <scope>IDENTIFICATION</scope>
</reference>